<evidence type="ECO:0000255" key="1">
    <source>
        <dbReference type="HAMAP-Rule" id="MF_00153"/>
    </source>
</evidence>
<sequence length="312" mass="34946">MINREDLLKNPVEDIALSDLEKYSDIVNVFDKIYGFSSEGIVRGSKILKEMIKDADLRFLSFTANLVSTGLRGLFADLVKRGYFNIIVTTGGTIDHDLARSFGGVYYKGSFDIDDAMLKDLEIHRLGNVLVPFESYGKVIEEIVRKFLPEIAKDKKEIPAYELLWEFGKRISDSNSILRAAYEKKVPVIVPGIVDGSFGTNLFIQSQFLNFKINLFEDMRLIKDLVFSCKKSGALIIGGGISKHHTIWWNQFKDGLDYAVYVTTAQEYDGSLSGAKPREAISWNKIRPNAKHATIYGDATIIVPILAASLLS</sequence>
<protein>
    <recommendedName>
        <fullName evidence="1">Probable deoxyhypusine synthase</fullName>
        <shortName evidence="1">DHS</shortName>
        <ecNumber evidence="1">2.5.1.46</ecNumber>
    </recommendedName>
</protein>
<dbReference type="EC" id="2.5.1.46" evidence="1"/>
<dbReference type="EMBL" id="CP001403">
    <property type="protein sequence ID" value="ACP45507.1"/>
    <property type="molecule type" value="Genomic_DNA"/>
</dbReference>
<dbReference type="RefSeq" id="WP_012711264.1">
    <property type="nucleotide sequence ID" value="NC_012622.1"/>
</dbReference>
<dbReference type="SMR" id="C3NDW8"/>
<dbReference type="KEGG" id="siy:YG5714_1241"/>
<dbReference type="HOGENOM" id="CLU_039781_1_0_2"/>
<dbReference type="UniPathway" id="UPA00354"/>
<dbReference type="Proteomes" id="UP000002308">
    <property type="component" value="Chromosome"/>
</dbReference>
<dbReference type="GO" id="GO:0005737">
    <property type="term" value="C:cytoplasm"/>
    <property type="evidence" value="ECO:0007669"/>
    <property type="project" value="TreeGrafter"/>
</dbReference>
<dbReference type="GO" id="GO:0034038">
    <property type="term" value="F:deoxyhypusine synthase activity"/>
    <property type="evidence" value="ECO:0007669"/>
    <property type="project" value="UniProtKB-UniRule"/>
</dbReference>
<dbReference type="FunFam" id="3.40.910.10:FF:000007">
    <property type="entry name" value="Probable deoxyhypusine synthase"/>
    <property type="match status" value="1"/>
</dbReference>
<dbReference type="Gene3D" id="3.40.910.10">
    <property type="entry name" value="Deoxyhypusine synthase"/>
    <property type="match status" value="1"/>
</dbReference>
<dbReference type="HAMAP" id="MF_00153">
    <property type="entry name" value="DHS"/>
    <property type="match status" value="1"/>
</dbReference>
<dbReference type="InterPro" id="IPR022899">
    <property type="entry name" value="Deoxyhypus_synthase_arc"/>
</dbReference>
<dbReference type="InterPro" id="IPR002773">
    <property type="entry name" value="Deoxyhypusine_synthase"/>
</dbReference>
<dbReference type="InterPro" id="IPR036982">
    <property type="entry name" value="Deoxyhypusine_synthase_sf"/>
</dbReference>
<dbReference type="InterPro" id="IPR029035">
    <property type="entry name" value="DHS-like_NAD/FAD-binding_dom"/>
</dbReference>
<dbReference type="NCBIfam" id="NF002294">
    <property type="entry name" value="PRK01221.1"/>
    <property type="match status" value="1"/>
</dbReference>
<dbReference type="PANTHER" id="PTHR11703">
    <property type="entry name" value="DEOXYHYPUSINE SYNTHASE"/>
    <property type="match status" value="1"/>
</dbReference>
<dbReference type="PANTHER" id="PTHR11703:SF0">
    <property type="entry name" value="DEOXYHYPUSINE SYNTHASE"/>
    <property type="match status" value="1"/>
</dbReference>
<dbReference type="Pfam" id="PF01916">
    <property type="entry name" value="DS"/>
    <property type="match status" value="1"/>
</dbReference>
<dbReference type="SUPFAM" id="SSF52467">
    <property type="entry name" value="DHS-like NAD/FAD-binding domain"/>
    <property type="match status" value="1"/>
</dbReference>
<accession>C3NDW8</accession>
<reference key="1">
    <citation type="journal article" date="2009" name="Proc. Natl. Acad. Sci. U.S.A.">
        <title>Biogeography of the Sulfolobus islandicus pan-genome.</title>
        <authorList>
            <person name="Reno M.L."/>
            <person name="Held N.L."/>
            <person name="Fields C.J."/>
            <person name="Burke P.V."/>
            <person name="Whitaker R.J."/>
        </authorList>
    </citation>
    <scope>NUCLEOTIDE SEQUENCE [LARGE SCALE GENOMIC DNA]</scope>
    <source>
        <strain>Y.G.57.14 / Yellowstone #1</strain>
    </source>
</reference>
<organism>
    <name type="scientific">Saccharolobus islandicus (strain Y.G.57.14 / Yellowstone #1)</name>
    <name type="common">Sulfolobus islandicus</name>
    <dbReference type="NCBI Taxonomy" id="439386"/>
    <lineage>
        <taxon>Archaea</taxon>
        <taxon>Thermoproteota</taxon>
        <taxon>Thermoprotei</taxon>
        <taxon>Sulfolobales</taxon>
        <taxon>Sulfolobaceae</taxon>
        <taxon>Saccharolobus</taxon>
    </lineage>
</organism>
<feature type="chain" id="PRO_1000203449" description="Probable deoxyhypusine synthase">
    <location>
        <begin position="1"/>
        <end position="312"/>
    </location>
</feature>
<feature type="active site" description="Nucleophile" evidence="1">
    <location>
        <position position="285"/>
    </location>
</feature>
<keyword id="KW-0386">Hypusine biosynthesis</keyword>
<keyword id="KW-0520">NAD</keyword>
<keyword id="KW-0808">Transferase</keyword>
<comment type="function">
    <text evidence="1">Catalyzes the NAD-dependent oxidative cleavage of spermidine and the subsequent transfer of the butylamine moiety of spermidine to the epsilon-amino group of a specific lysine residue of the eIF-5A precursor protein to form the intermediate deoxyhypusine residue.</text>
</comment>
<comment type="catalytic activity">
    <reaction evidence="1">
        <text>[eIF5A protein]-L-lysine + spermidine = [eIF5A protein]-deoxyhypusine + propane-1,3-diamine</text>
        <dbReference type="Rhea" id="RHEA:33299"/>
        <dbReference type="Rhea" id="RHEA-COMP:10143"/>
        <dbReference type="Rhea" id="RHEA-COMP:10144"/>
        <dbReference type="ChEBI" id="CHEBI:29969"/>
        <dbReference type="ChEBI" id="CHEBI:57484"/>
        <dbReference type="ChEBI" id="CHEBI:57834"/>
        <dbReference type="ChEBI" id="CHEBI:82657"/>
        <dbReference type="EC" id="2.5.1.46"/>
    </reaction>
</comment>
<comment type="cofactor">
    <cofactor evidence="1">
        <name>NAD(+)</name>
        <dbReference type="ChEBI" id="CHEBI:57540"/>
    </cofactor>
</comment>
<comment type="pathway">
    <text evidence="1">Protein modification; eIF5A hypusination.</text>
</comment>
<comment type="similarity">
    <text evidence="1">Belongs to the deoxyhypusine synthase family.</text>
</comment>
<name>DHYS_SACI7</name>
<gene>
    <name evidence="1" type="primary">dys</name>
    <name type="ordered locus">YG5714_1241</name>
</gene>
<proteinExistence type="inferred from homology"/>